<dbReference type="EC" id="2.1.1.228" evidence="1"/>
<dbReference type="EMBL" id="CP001048">
    <property type="protein sequence ID" value="ACC87856.1"/>
    <property type="molecule type" value="Genomic_DNA"/>
</dbReference>
<dbReference type="RefSeq" id="WP_002222284.1">
    <property type="nucleotide sequence ID" value="NZ_CP009780.1"/>
</dbReference>
<dbReference type="SMR" id="B2K5Z0"/>
<dbReference type="GeneID" id="57975424"/>
<dbReference type="KEGG" id="ypb:YPTS_0872"/>
<dbReference type="PATRIC" id="fig|502801.10.peg.206"/>
<dbReference type="GO" id="GO:0005829">
    <property type="term" value="C:cytosol"/>
    <property type="evidence" value="ECO:0007669"/>
    <property type="project" value="TreeGrafter"/>
</dbReference>
<dbReference type="GO" id="GO:0052906">
    <property type="term" value="F:tRNA (guanine(37)-N1)-methyltransferase activity"/>
    <property type="evidence" value="ECO:0007669"/>
    <property type="project" value="UniProtKB-UniRule"/>
</dbReference>
<dbReference type="GO" id="GO:0002939">
    <property type="term" value="P:tRNA N1-guanine methylation"/>
    <property type="evidence" value="ECO:0007669"/>
    <property type="project" value="TreeGrafter"/>
</dbReference>
<dbReference type="CDD" id="cd18080">
    <property type="entry name" value="TrmD-like"/>
    <property type="match status" value="1"/>
</dbReference>
<dbReference type="FunFam" id="1.10.1270.20:FF:000001">
    <property type="entry name" value="tRNA (guanine-N(1)-)-methyltransferase"/>
    <property type="match status" value="1"/>
</dbReference>
<dbReference type="FunFam" id="3.40.1280.10:FF:000001">
    <property type="entry name" value="tRNA (guanine-N(1)-)-methyltransferase"/>
    <property type="match status" value="1"/>
</dbReference>
<dbReference type="Gene3D" id="3.40.1280.10">
    <property type="match status" value="1"/>
</dbReference>
<dbReference type="Gene3D" id="1.10.1270.20">
    <property type="entry name" value="tRNA(m1g37)methyltransferase, domain 2"/>
    <property type="match status" value="1"/>
</dbReference>
<dbReference type="HAMAP" id="MF_00605">
    <property type="entry name" value="TrmD"/>
    <property type="match status" value="1"/>
</dbReference>
<dbReference type="InterPro" id="IPR029028">
    <property type="entry name" value="Alpha/beta_knot_MTases"/>
</dbReference>
<dbReference type="InterPro" id="IPR023148">
    <property type="entry name" value="tRNA_m1G_MeTrfase_C_sf"/>
</dbReference>
<dbReference type="InterPro" id="IPR002649">
    <property type="entry name" value="tRNA_m1G_MeTrfase_TrmD"/>
</dbReference>
<dbReference type="InterPro" id="IPR029026">
    <property type="entry name" value="tRNA_m1G_MTases_N"/>
</dbReference>
<dbReference type="InterPro" id="IPR016009">
    <property type="entry name" value="tRNA_MeTrfase_TRMD/TRM10"/>
</dbReference>
<dbReference type="NCBIfam" id="NF000648">
    <property type="entry name" value="PRK00026.1"/>
    <property type="match status" value="1"/>
</dbReference>
<dbReference type="NCBIfam" id="TIGR00088">
    <property type="entry name" value="trmD"/>
    <property type="match status" value="1"/>
</dbReference>
<dbReference type="PANTHER" id="PTHR46417">
    <property type="entry name" value="TRNA (GUANINE-N(1)-)-METHYLTRANSFERASE"/>
    <property type="match status" value="1"/>
</dbReference>
<dbReference type="PANTHER" id="PTHR46417:SF1">
    <property type="entry name" value="TRNA (GUANINE-N(1)-)-METHYLTRANSFERASE"/>
    <property type="match status" value="1"/>
</dbReference>
<dbReference type="Pfam" id="PF01746">
    <property type="entry name" value="tRNA_m1G_MT"/>
    <property type="match status" value="1"/>
</dbReference>
<dbReference type="PIRSF" id="PIRSF000386">
    <property type="entry name" value="tRNA_mtase"/>
    <property type="match status" value="1"/>
</dbReference>
<dbReference type="SUPFAM" id="SSF75217">
    <property type="entry name" value="alpha/beta knot"/>
    <property type="match status" value="1"/>
</dbReference>
<name>TRMD_YERPB</name>
<reference key="1">
    <citation type="submission" date="2008-04" db="EMBL/GenBank/DDBJ databases">
        <title>Complete sequence of Yersinia pseudotuberculosis PB1/+.</title>
        <authorList>
            <person name="Copeland A."/>
            <person name="Lucas S."/>
            <person name="Lapidus A."/>
            <person name="Glavina del Rio T."/>
            <person name="Dalin E."/>
            <person name="Tice H."/>
            <person name="Bruce D."/>
            <person name="Goodwin L."/>
            <person name="Pitluck S."/>
            <person name="Munk A.C."/>
            <person name="Brettin T."/>
            <person name="Detter J.C."/>
            <person name="Han C."/>
            <person name="Tapia R."/>
            <person name="Schmutz J."/>
            <person name="Larimer F."/>
            <person name="Land M."/>
            <person name="Hauser L."/>
            <person name="Challacombe J.F."/>
            <person name="Green L."/>
            <person name="Lindler L.E."/>
            <person name="Nikolich M.P."/>
            <person name="Richardson P."/>
        </authorList>
    </citation>
    <scope>NUCLEOTIDE SEQUENCE [LARGE SCALE GENOMIC DNA]</scope>
    <source>
        <strain>PB1/+</strain>
    </source>
</reference>
<evidence type="ECO:0000255" key="1">
    <source>
        <dbReference type="HAMAP-Rule" id="MF_00605"/>
    </source>
</evidence>
<feature type="chain" id="PRO_1000130227" description="tRNA (guanine-N(1)-)-methyltransferase">
    <location>
        <begin position="1"/>
        <end position="246"/>
    </location>
</feature>
<feature type="binding site" evidence="1">
    <location>
        <position position="113"/>
    </location>
    <ligand>
        <name>S-adenosyl-L-methionine</name>
        <dbReference type="ChEBI" id="CHEBI:59789"/>
    </ligand>
</feature>
<feature type="binding site" evidence="1">
    <location>
        <begin position="133"/>
        <end position="138"/>
    </location>
    <ligand>
        <name>S-adenosyl-L-methionine</name>
        <dbReference type="ChEBI" id="CHEBI:59789"/>
    </ligand>
</feature>
<protein>
    <recommendedName>
        <fullName evidence="1">tRNA (guanine-N(1)-)-methyltransferase</fullName>
        <ecNumber evidence="1">2.1.1.228</ecNumber>
    </recommendedName>
    <alternativeName>
        <fullName evidence="1">M1G-methyltransferase</fullName>
    </alternativeName>
    <alternativeName>
        <fullName evidence="1">tRNA [GM37] methyltransferase</fullName>
    </alternativeName>
</protein>
<organism>
    <name type="scientific">Yersinia pseudotuberculosis serotype IB (strain PB1/+)</name>
    <dbReference type="NCBI Taxonomy" id="502801"/>
    <lineage>
        <taxon>Bacteria</taxon>
        <taxon>Pseudomonadati</taxon>
        <taxon>Pseudomonadota</taxon>
        <taxon>Gammaproteobacteria</taxon>
        <taxon>Enterobacterales</taxon>
        <taxon>Yersiniaceae</taxon>
        <taxon>Yersinia</taxon>
    </lineage>
</organism>
<comment type="function">
    <text evidence="1">Specifically methylates guanosine-37 in various tRNAs.</text>
</comment>
<comment type="catalytic activity">
    <reaction evidence="1">
        <text>guanosine(37) in tRNA + S-adenosyl-L-methionine = N(1)-methylguanosine(37) in tRNA + S-adenosyl-L-homocysteine + H(+)</text>
        <dbReference type="Rhea" id="RHEA:36899"/>
        <dbReference type="Rhea" id="RHEA-COMP:10145"/>
        <dbReference type="Rhea" id="RHEA-COMP:10147"/>
        <dbReference type="ChEBI" id="CHEBI:15378"/>
        <dbReference type="ChEBI" id="CHEBI:57856"/>
        <dbReference type="ChEBI" id="CHEBI:59789"/>
        <dbReference type="ChEBI" id="CHEBI:73542"/>
        <dbReference type="ChEBI" id="CHEBI:74269"/>
        <dbReference type="EC" id="2.1.1.228"/>
    </reaction>
</comment>
<comment type="subunit">
    <text evidence="1">Homodimer.</text>
</comment>
<comment type="subcellular location">
    <subcellularLocation>
        <location evidence="1">Cytoplasm</location>
    </subcellularLocation>
</comment>
<comment type="similarity">
    <text evidence="1">Belongs to the RNA methyltransferase TrmD family.</text>
</comment>
<sequence length="246" mass="27618">MWIGVISLFPEMFRAITDYGVTGRAVKNGLLSVQCWSPRDFTYDRHRTVDDRPYGGGPGMLMMVQPLREAIHAAKAAAGEGAKVIYLSPQGRKLDQQGVCELAMNQKMILVCGRYEGVDERVIKTEIDEEWSIGDYVLSGGELPAMTLIDSVSRFIPGVLGHHASAEEDSFVDGLLDCPHYTRPEVLEGMEVPPVLLSGNHAEIRRWRLKQSLGRTWLRRPELLESLALTDEQMVLLAEFQREHKP</sequence>
<proteinExistence type="inferred from homology"/>
<accession>B2K5Z0</accession>
<keyword id="KW-0963">Cytoplasm</keyword>
<keyword id="KW-0489">Methyltransferase</keyword>
<keyword id="KW-0949">S-adenosyl-L-methionine</keyword>
<keyword id="KW-0808">Transferase</keyword>
<keyword id="KW-0819">tRNA processing</keyword>
<gene>
    <name evidence="1" type="primary">trmD</name>
    <name type="ordered locus">YPTS_0872</name>
</gene>